<gene>
    <name evidence="6" type="primary">VMA2</name>
    <name type="ordered locus">CAALFM_CR05780WA</name>
    <name type="ORF">CaO19.13955</name>
    <name type="ORF">CaO19.6634</name>
</gene>
<evidence type="ECO:0000250" key="1">
    <source>
        <dbReference type="UniProtKB" id="P16140"/>
    </source>
</evidence>
<evidence type="ECO:0000250" key="2">
    <source>
        <dbReference type="UniProtKB" id="P21281"/>
    </source>
</evidence>
<evidence type="ECO:0000255" key="3">
    <source>
        <dbReference type="PROSITE-ProRule" id="PRU10106"/>
    </source>
</evidence>
<evidence type="ECO:0000256" key="4">
    <source>
        <dbReference type="SAM" id="MobiDB-lite"/>
    </source>
</evidence>
<evidence type="ECO:0000269" key="5">
    <source>
    </source>
</evidence>
<evidence type="ECO:0000303" key="6">
    <source>
    </source>
</evidence>
<evidence type="ECO:0000305" key="7"/>
<feature type="chain" id="PRO_0000430554" description="V-type proton ATPase subunit B">
    <location>
        <begin position="1"/>
        <end position="512"/>
    </location>
</feature>
<feature type="region of interest" description="Disordered" evidence="4">
    <location>
        <begin position="484"/>
        <end position="512"/>
    </location>
</feature>
<feature type="compositionally biased region" description="Acidic residues" evidence="4">
    <location>
        <begin position="491"/>
        <end position="502"/>
    </location>
</feature>
<feature type="compositionally biased region" description="Basic and acidic residues" evidence="4">
    <location>
        <begin position="503"/>
        <end position="512"/>
    </location>
</feature>
<feature type="binding site" evidence="2">
    <location>
        <position position="381"/>
    </location>
    <ligand>
        <name>ATP</name>
        <dbReference type="ChEBI" id="CHEBI:30616"/>
    </ligand>
</feature>
<feature type="site" description="Required for activity" evidence="3">
    <location>
        <position position="378"/>
    </location>
</feature>
<comment type="function">
    <text evidence="1 5">Non-catalytic subunit of the V1 complex of vacuolar(H+)-ATPase (V-ATPase), a multisubunit enzyme composed of a peripheral complex (V1) that hydrolyzes ATP and a membrane integral complex (V0) that translocates protons (By similarity). Plays an important role in resistance to several stresses, as well as in autophagy and virulence (PubMed:25038082).</text>
</comment>
<comment type="subunit">
    <text evidence="1">V-ATPase is a heteromultimeric enzyme composed of a peripheral catalytic V1 complex (components A to H) attached to an integral membrane V0 proton pore complex (components: a, c, c', c'', d, e, f and VOA1).</text>
</comment>
<comment type="subcellular location">
    <subcellularLocation>
        <location evidence="1">Vacuole membrane</location>
        <topology evidence="7">Peripheral membrane protein</topology>
        <orientation evidence="7">Cytoplasmic side</orientation>
    </subcellularLocation>
</comment>
<comment type="disruption phenotype">
    <text evidence="5">Results in the inability to grow at alcaline pH and altered resistance to calcium, osmotic stress, cold temperature, antifungal drugs and growth on non-fermentable carbon sources. Leads also to unability to fully assemble the V-ATPase at the vacuolar membrane and impairs its proton transport and ATPase activities. Finally, leads to autophagy defect and avirulence in a Caenorhabditis elegans infection model.</text>
</comment>
<comment type="similarity">
    <text evidence="7">Belongs to the ATPase alpha/beta chains family.</text>
</comment>
<keyword id="KW-0067">ATP-binding</keyword>
<keyword id="KW-0072">Autophagy</keyword>
<keyword id="KW-0375">Hydrogen ion transport</keyword>
<keyword id="KW-0406">Ion transport</keyword>
<keyword id="KW-0472">Membrane</keyword>
<keyword id="KW-0547">Nucleotide-binding</keyword>
<keyword id="KW-1185">Reference proteome</keyword>
<keyword id="KW-0813">Transport</keyword>
<keyword id="KW-0926">Vacuole</keyword>
<keyword id="KW-0843">Virulence</keyword>
<dbReference type="EMBL" id="CP017630">
    <property type="protein sequence ID" value="AOW31294.1"/>
    <property type="molecule type" value="Genomic_DNA"/>
</dbReference>
<dbReference type="RefSeq" id="XP_711700.1">
    <property type="nucleotide sequence ID" value="XM_706608.1"/>
</dbReference>
<dbReference type="SMR" id="Q59PT0"/>
<dbReference type="BioGRID" id="1229299">
    <property type="interactions" value="3"/>
</dbReference>
<dbReference type="FunCoup" id="Q59PT0">
    <property type="interactions" value="1745"/>
</dbReference>
<dbReference type="STRING" id="237561.Q59PT0"/>
<dbReference type="EnsemblFungi" id="CR_05780W_A-T">
    <property type="protein sequence ID" value="CR_05780W_A-T-p1"/>
    <property type="gene ID" value="CR_05780W_A"/>
</dbReference>
<dbReference type="GeneID" id="3646710"/>
<dbReference type="KEGG" id="cal:CAALFM_CR05780WA"/>
<dbReference type="CGD" id="CAL0000199755">
    <property type="gene designation" value="VMA2"/>
</dbReference>
<dbReference type="VEuPathDB" id="FungiDB:CR_05780W_A"/>
<dbReference type="eggNOG" id="KOG1351">
    <property type="taxonomic scope" value="Eukaryota"/>
</dbReference>
<dbReference type="HOGENOM" id="CLU_022916_3_0_1"/>
<dbReference type="InParanoid" id="Q59PT0"/>
<dbReference type="OMA" id="EGFKIKP"/>
<dbReference type="OrthoDB" id="1735853at2759"/>
<dbReference type="PRO" id="PR:Q59PT0"/>
<dbReference type="Proteomes" id="UP000000559">
    <property type="component" value="Chromosome R"/>
</dbReference>
<dbReference type="GO" id="GO:0005886">
    <property type="term" value="C:plasma membrane"/>
    <property type="evidence" value="ECO:0000314"/>
    <property type="project" value="CGD"/>
</dbReference>
<dbReference type="GO" id="GO:0000221">
    <property type="term" value="C:vacuolar proton-transporting V-type ATPase, V1 domain"/>
    <property type="evidence" value="ECO:0000250"/>
    <property type="project" value="UniProtKB"/>
</dbReference>
<dbReference type="GO" id="GO:0005524">
    <property type="term" value="F:ATP binding"/>
    <property type="evidence" value="ECO:0007669"/>
    <property type="project" value="UniProtKB-KW"/>
</dbReference>
<dbReference type="GO" id="GO:0046961">
    <property type="term" value="F:proton-transporting ATPase activity, rotational mechanism"/>
    <property type="evidence" value="ECO:0000318"/>
    <property type="project" value="GO_Central"/>
</dbReference>
<dbReference type="GO" id="GO:0046034">
    <property type="term" value="P:ATP metabolic process"/>
    <property type="evidence" value="ECO:0007669"/>
    <property type="project" value="InterPro"/>
</dbReference>
<dbReference type="GO" id="GO:0006914">
    <property type="term" value="P:autophagy"/>
    <property type="evidence" value="ECO:0000315"/>
    <property type="project" value="CGD"/>
</dbReference>
<dbReference type="GO" id="GO:0007035">
    <property type="term" value="P:vacuolar acidification"/>
    <property type="evidence" value="ECO:0000315"/>
    <property type="project" value="CGD"/>
</dbReference>
<dbReference type="CDD" id="cd18112">
    <property type="entry name" value="ATP-synt_V_A-type_beta_C"/>
    <property type="match status" value="1"/>
</dbReference>
<dbReference type="CDD" id="cd18118">
    <property type="entry name" value="ATP-synt_V_A-type_beta_N"/>
    <property type="match status" value="1"/>
</dbReference>
<dbReference type="CDD" id="cd01135">
    <property type="entry name" value="V_A-ATPase_B"/>
    <property type="match status" value="1"/>
</dbReference>
<dbReference type="FunFam" id="3.40.50.12240:FF:000001">
    <property type="entry name" value="V-type proton ATPase subunit B, brain"/>
    <property type="match status" value="1"/>
</dbReference>
<dbReference type="Gene3D" id="3.40.50.12240">
    <property type="match status" value="1"/>
</dbReference>
<dbReference type="HAMAP" id="MF_00310">
    <property type="entry name" value="ATP_synth_B_arch"/>
    <property type="match status" value="1"/>
</dbReference>
<dbReference type="InterPro" id="IPR055190">
    <property type="entry name" value="ATP-synt_VA_C"/>
</dbReference>
<dbReference type="InterPro" id="IPR020003">
    <property type="entry name" value="ATPase_a/bsu_AS"/>
</dbReference>
<dbReference type="InterPro" id="IPR004100">
    <property type="entry name" value="ATPase_F1/V1/A1_a/bsu_N"/>
</dbReference>
<dbReference type="InterPro" id="IPR000194">
    <property type="entry name" value="ATPase_F1/V1/A1_a/bsu_nucl-bd"/>
</dbReference>
<dbReference type="InterPro" id="IPR005723">
    <property type="entry name" value="ATPase_V1-cplx_bsu"/>
</dbReference>
<dbReference type="InterPro" id="IPR027417">
    <property type="entry name" value="P-loop_NTPase"/>
</dbReference>
<dbReference type="InterPro" id="IPR022879">
    <property type="entry name" value="V-ATPase_su_B/beta"/>
</dbReference>
<dbReference type="NCBIfam" id="NF003235">
    <property type="entry name" value="PRK04196.1"/>
    <property type="match status" value="1"/>
</dbReference>
<dbReference type="NCBIfam" id="TIGR01040">
    <property type="entry name" value="V-ATPase_V1_B"/>
    <property type="match status" value="1"/>
</dbReference>
<dbReference type="PANTHER" id="PTHR43389">
    <property type="entry name" value="V-TYPE PROTON ATPASE SUBUNIT B"/>
    <property type="match status" value="1"/>
</dbReference>
<dbReference type="PANTHER" id="PTHR43389:SF4">
    <property type="entry name" value="V-TYPE PROTON ATPASE SUBUNIT B"/>
    <property type="match status" value="1"/>
</dbReference>
<dbReference type="Pfam" id="PF00006">
    <property type="entry name" value="ATP-synt_ab"/>
    <property type="match status" value="1"/>
</dbReference>
<dbReference type="Pfam" id="PF02874">
    <property type="entry name" value="ATP-synt_ab_N"/>
    <property type="match status" value="1"/>
</dbReference>
<dbReference type="Pfam" id="PF22919">
    <property type="entry name" value="ATP-synt_VA_C"/>
    <property type="match status" value="1"/>
</dbReference>
<dbReference type="PIRSF" id="PIRSF039114">
    <property type="entry name" value="V-ATPsynth_beta/V-ATPase_B"/>
    <property type="match status" value="1"/>
</dbReference>
<dbReference type="SUPFAM" id="SSF52540">
    <property type="entry name" value="P-loop containing nucleoside triphosphate hydrolases"/>
    <property type="match status" value="1"/>
</dbReference>
<dbReference type="PROSITE" id="PS00152">
    <property type="entry name" value="ATPASE_ALPHA_BETA"/>
    <property type="match status" value="1"/>
</dbReference>
<proteinExistence type="inferred from homology"/>
<protein>
    <recommendedName>
        <fullName evidence="1">V-type proton ATPase subunit B</fullName>
        <shortName evidence="1">V-ATPase subunit B</shortName>
    </recommendedName>
    <alternativeName>
        <fullName evidence="1">Vacuolar proton pump subunit B</fullName>
    </alternativeName>
</protein>
<sequence>MSLSDKELFELNKKAVTEGFKIKPRINYNTVGGVNGPLVILDNVKFPRYNEIVNLTLPDGSVRQGQVLEVRGTKAIVQVFEGTSGIDVKKTRVEFTGENLKIPVSEDMLGRIFDGSGRPIDKGPKIFAEDYLDINGSPINPYARIYPEEMISTGVSAIDTMNSIARGQKIPIFSASGLPHNEIAAQICRQAGLVRPTKDVHDGHEENFSIVFAAMGVNLETSRFFKQDFEENGSLERTTLFLNLANDPTIERIITPRLALTTAEFLAYQTERHVLTILTDMSSYADALREVSAAREEVPGRRGYPGYMYTDLSTIYERAGRVEGRNGSITQVPILTMPNDDITHPIPDLTGYITEGQIFIDRQLHNRGIYPPINVLPSLSRLMKSAIGEGMTRKDHGDVSNQLYAKYAIGKDAAAMKAVVGEEALSTEDKLSLEFLEKFEKNFISQGAYENRSIFESLDLAWSLLRIYPKELLNRISPKILEELYGRDREQDDDEDEDEEDPDKSGDKLIDA</sequence>
<organism>
    <name type="scientific">Candida albicans (strain SC5314 / ATCC MYA-2876)</name>
    <name type="common">Yeast</name>
    <dbReference type="NCBI Taxonomy" id="237561"/>
    <lineage>
        <taxon>Eukaryota</taxon>
        <taxon>Fungi</taxon>
        <taxon>Dikarya</taxon>
        <taxon>Ascomycota</taxon>
        <taxon>Saccharomycotina</taxon>
        <taxon>Pichiomycetes</taxon>
        <taxon>Debaryomycetaceae</taxon>
        <taxon>Candida/Lodderomyces clade</taxon>
        <taxon>Candida</taxon>
    </lineage>
</organism>
<accession>Q59PT0</accession>
<accession>A0A1D8PT25</accession>
<name>VATB_CANAL</name>
<reference key="1">
    <citation type="journal article" date="2004" name="Proc. Natl. Acad. Sci. U.S.A.">
        <title>The diploid genome sequence of Candida albicans.</title>
        <authorList>
            <person name="Jones T."/>
            <person name="Federspiel N.A."/>
            <person name="Chibana H."/>
            <person name="Dungan J."/>
            <person name="Kalman S."/>
            <person name="Magee B.B."/>
            <person name="Newport G."/>
            <person name="Thorstenson Y.R."/>
            <person name="Agabian N."/>
            <person name="Magee P.T."/>
            <person name="Davis R.W."/>
            <person name="Scherer S."/>
        </authorList>
    </citation>
    <scope>NUCLEOTIDE SEQUENCE [LARGE SCALE GENOMIC DNA]</scope>
    <source>
        <strain>SC5314 / ATCC MYA-2876</strain>
    </source>
</reference>
<reference key="2">
    <citation type="journal article" date="2007" name="Genome Biol.">
        <title>Assembly of the Candida albicans genome into sixteen supercontigs aligned on the eight chromosomes.</title>
        <authorList>
            <person name="van het Hoog M."/>
            <person name="Rast T.J."/>
            <person name="Martchenko M."/>
            <person name="Grindle S."/>
            <person name="Dignard D."/>
            <person name="Hogues H."/>
            <person name="Cuomo C."/>
            <person name="Berriman M."/>
            <person name="Scherer S."/>
            <person name="Magee B.B."/>
            <person name="Whiteway M."/>
            <person name="Chibana H."/>
            <person name="Nantel A."/>
            <person name="Magee P.T."/>
        </authorList>
    </citation>
    <scope>GENOME REANNOTATION</scope>
    <source>
        <strain>SC5314 / ATCC MYA-2876</strain>
    </source>
</reference>
<reference key="3">
    <citation type="journal article" date="2013" name="Genome Biol.">
        <title>Assembly of a phased diploid Candida albicans genome facilitates allele-specific measurements and provides a simple model for repeat and indel structure.</title>
        <authorList>
            <person name="Muzzey D."/>
            <person name="Schwartz K."/>
            <person name="Weissman J.S."/>
            <person name="Sherlock G."/>
        </authorList>
    </citation>
    <scope>NUCLEOTIDE SEQUENCE [LARGE SCALE GENOMIC DNA]</scope>
    <scope>GENOME REANNOTATION</scope>
    <source>
        <strain>SC5314 / ATCC MYA-2876</strain>
    </source>
</reference>
<reference key="4">
    <citation type="journal article" date="2014" name="Eukaryot. Cell">
        <title>The contribution of Candida albicans vacuolar ATPase subunit V1B encoded by VMA2 to stress response, autophagy, and virulence is independent of environmental pH.</title>
        <authorList>
            <person name="Rane H.S."/>
            <person name="Bernardo S.M."/>
            <person name="Hayek S.R."/>
            <person name="Binder J.L."/>
            <person name="Parra K.J."/>
            <person name="Lee S.A."/>
        </authorList>
    </citation>
    <scope>DISRUPTION PHENOTYPE</scope>
    <scope>FUNCTION</scope>
</reference>